<sequence>MSRLRIFADTNPATPEFDSRDGDAIASELKKIGVTFERWHASAPVEPGATPEQVMDAYRADIDRISAERGFKTVDVVSIAPDNPKREEMRAKFLDEHFHKEDEVRFFVAGSGLFTLHVDAKVYEIECVKDDLIAVPDSTLHWFDMGPEPHFVAIRFFTEPDGWVGHFTGTEIAKQFPRYAPEKPHKAS</sequence>
<proteinExistence type="inferred from homology"/>
<keyword id="KW-0028">Amino-acid biosynthesis</keyword>
<keyword id="KW-0223">Dioxygenase</keyword>
<keyword id="KW-0408">Iron</keyword>
<keyword id="KW-0479">Metal-binding</keyword>
<keyword id="KW-0486">Methionine biosynthesis</keyword>
<keyword id="KW-0533">Nickel</keyword>
<keyword id="KW-0560">Oxidoreductase</keyword>
<protein>
    <recommendedName>
        <fullName evidence="1">Acireductone dioxygenase</fullName>
    </recommendedName>
    <alternativeName>
        <fullName evidence="1">1,2-dihydroxy-3-keto-5-methylthiopentene dioxygenase</fullName>
        <shortName evidence="1">DHK-MTPene dioxygenase</shortName>
    </alternativeName>
    <alternativeName>
        <fullName evidence="1">Acireductone dioxygenase (Fe(2+)-requiring)</fullName>
        <shortName evidence="1">ARD'</shortName>
        <shortName evidence="1">Fe-ARD</shortName>
        <ecNumber evidence="1">1.13.11.54</ecNumber>
    </alternativeName>
    <alternativeName>
        <fullName evidence="1">Acireductone dioxygenase (Ni(2+)-requiring)</fullName>
        <shortName evidence="1">ARD</shortName>
        <shortName evidence="1">Ni-ARD</shortName>
        <ecNumber evidence="1">1.13.11.53</ecNumber>
    </alternativeName>
</protein>
<evidence type="ECO:0000255" key="1">
    <source>
        <dbReference type="HAMAP-Rule" id="MF_01682"/>
    </source>
</evidence>
<dbReference type="EC" id="1.13.11.54" evidence="1"/>
<dbReference type="EC" id="1.13.11.53" evidence="1"/>
<dbReference type="EMBL" id="AP008229">
    <property type="protein sequence ID" value="BAE68762.1"/>
    <property type="molecule type" value="Genomic_DNA"/>
</dbReference>
<dbReference type="RefSeq" id="WP_011408417.1">
    <property type="nucleotide sequence ID" value="NC_007705.1"/>
</dbReference>
<dbReference type="SMR" id="Q2P3W5"/>
<dbReference type="KEGG" id="xom:XOO2007"/>
<dbReference type="HOGENOM" id="CLU_125400_0_0_6"/>
<dbReference type="UniPathway" id="UPA00904">
    <property type="reaction ID" value="UER00878"/>
</dbReference>
<dbReference type="GO" id="GO:0010308">
    <property type="term" value="F:acireductone dioxygenase (Ni2+-requiring) activity"/>
    <property type="evidence" value="ECO:0007669"/>
    <property type="project" value="UniProtKB-UniRule"/>
</dbReference>
<dbReference type="GO" id="GO:0010309">
    <property type="term" value="F:acireductone dioxygenase [iron(II)-requiring] activity"/>
    <property type="evidence" value="ECO:0007669"/>
    <property type="project" value="UniProtKB-UniRule"/>
</dbReference>
<dbReference type="GO" id="GO:0005506">
    <property type="term" value="F:iron ion binding"/>
    <property type="evidence" value="ECO:0007669"/>
    <property type="project" value="UniProtKB-UniRule"/>
</dbReference>
<dbReference type="GO" id="GO:0016151">
    <property type="term" value="F:nickel cation binding"/>
    <property type="evidence" value="ECO:0007669"/>
    <property type="project" value="UniProtKB-UniRule"/>
</dbReference>
<dbReference type="GO" id="GO:0019509">
    <property type="term" value="P:L-methionine salvage from methylthioadenosine"/>
    <property type="evidence" value="ECO:0007669"/>
    <property type="project" value="UniProtKB-UniRule"/>
</dbReference>
<dbReference type="GO" id="GO:0019284">
    <property type="term" value="P:L-methionine salvage from S-adenosylmethionine"/>
    <property type="evidence" value="ECO:0007669"/>
    <property type="project" value="InterPro"/>
</dbReference>
<dbReference type="CDD" id="cd02232">
    <property type="entry name" value="cupin_ARD"/>
    <property type="match status" value="1"/>
</dbReference>
<dbReference type="FunFam" id="2.60.120.10:FF:000056">
    <property type="entry name" value="Acireductone dioxygenase"/>
    <property type="match status" value="1"/>
</dbReference>
<dbReference type="Gene3D" id="2.60.120.10">
    <property type="entry name" value="Jelly Rolls"/>
    <property type="match status" value="1"/>
</dbReference>
<dbReference type="HAMAP" id="MF_01682">
    <property type="entry name" value="Salvage_MtnD"/>
    <property type="match status" value="1"/>
</dbReference>
<dbReference type="InterPro" id="IPR004313">
    <property type="entry name" value="ARD"/>
</dbReference>
<dbReference type="InterPro" id="IPR023956">
    <property type="entry name" value="ARD_bac"/>
</dbReference>
<dbReference type="InterPro" id="IPR014710">
    <property type="entry name" value="RmlC-like_jellyroll"/>
</dbReference>
<dbReference type="InterPro" id="IPR011051">
    <property type="entry name" value="RmlC_Cupin_sf"/>
</dbReference>
<dbReference type="PANTHER" id="PTHR23418">
    <property type="entry name" value="ACIREDUCTONE DIOXYGENASE"/>
    <property type="match status" value="1"/>
</dbReference>
<dbReference type="PANTHER" id="PTHR23418:SF0">
    <property type="entry name" value="ACIREDUCTONE DIOXYGENASE"/>
    <property type="match status" value="1"/>
</dbReference>
<dbReference type="Pfam" id="PF03079">
    <property type="entry name" value="ARD"/>
    <property type="match status" value="1"/>
</dbReference>
<dbReference type="SUPFAM" id="SSF51182">
    <property type="entry name" value="RmlC-like cupins"/>
    <property type="match status" value="1"/>
</dbReference>
<feature type="chain" id="PRO_0000359252" description="Acireductone dioxygenase">
    <location>
        <begin position="1"/>
        <end position="188"/>
    </location>
</feature>
<feature type="binding site" evidence="1">
    <location>
        <position position="97"/>
    </location>
    <ligand>
        <name>Fe(2+)</name>
        <dbReference type="ChEBI" id="CHEBI:29033"/>
    </ligand>
</feature>
<feature type="binding site" evidence="1">
    <location>
        <position position="97"/>
    </location>
    <ligand>
        <name>Ni(2+)</name>
        <dbReference type="ChEBI" id="CHEBI:49786"/>
    </ligand>
</feature>
<feature type="binding site" evidence="1">
    <location>
        <position position="99"/>
    </location>
    <ligand>
        <name>Fe(2+)</name>
        <dbReference type="ChEBI" id="CHEBI:29033"/>
    </ligand>
</feature>
<feature type="binding site" evidence="1">
    <location>
        <position position="99"/>
    </location>
    <ligand>
        <name>Ni(2+)</name>
        <dbReference type="ChEBI" id="CHEBI:49786"/>
    </ligand>
</feature>
<feature type="binding site" evidence="1">
    <location>
        <position position="103"/>
    </location>
    <ligand>
        <name>Fe(2+)</name>
        <dbReference type="ChEBI" id="CHEBI:29033"/>
    </ligand>
</feature>
<feature type="binding site" evidence="1">
    <location>
        <position position="103"/>
    </location>
    <ligand>
        <name>Ni(2+)</name>
        <dbReference type="ChEBI" id="CHEBI:49786"/>
    </ligand>
</feature>
<feature type="binding site" evidence="1">
    <location>
        <position position="141"/>
    </location>
    <ligand>
        <name>Fe(2+)</name>
        <dbReference type="ChEBI" id="CHEBI:29033"/>
    </ligand>
</feature>
<feature type="binding site" evidence="1">
    <location>
        <position position="141"/>
    </location>
    <ligand>
        <name>Ni(2+)</name>
        <dbReference type="ChEBI" id="CHEBI:49786"/>
    </ligand>
</feature>
<feature type="site" description="May play a role in metal incorporation in vivo" evidence="1">
    <location>
        <position position="96"/>
    </location>
</feature>
<feature type="site" description="May play a role in transmitting local conformational changes" evidence="1">
    <location>
        <position position="102"/>
    </location>
</feature>
<feature type="site" description="Important to generate the dianion" evidence="1">
    <location>
        <position position="105"/>
    </location>
</feature>
<comment type="function">
    <text evidence="1">Catalyzes 2 different reactions between oxygen and the acireductone 1,2-dihydroxy-3-keto-5-methylthiopentene (DHK-MTPene) depending upon the metal bound in the active site. Fe-containing acireductone dioxygenase (Fe-ARD) produces formate and 2-keto-4-methylthiobutyrate (KMTB), the alpha-ketoacid precursor of methionine in the methionine recycle pathway. Ni-containing acireductone dioxygenase (Ni-ARD) produces methylthiopropionate, carbon monoxide and formate, and does not lie on the methionine recycle pathway.</text>
</comment>
<comment type="catalytic activity">
    <reaction evidence="1">
        <text>1,2-dihydroxy-5-(methylsulfanyl)pent-1-en-3-one + O2 = 3-(methylsulfanyl)propanoate + CO + formate + 2 H(+)</text>
        <dbReference type="Rhea" id="RHEA:14161"/>
        <dbReference type="ChEBI" id="CHEBI:15378"/>
        <dbReference type="ChEBI" id="CHEBI:15379"/>
        <dbReference type="ChEBI" id="CHEBI:15740"/>
        <dbReference type="ChEBI" id="CHEBI:17245"/>
        <dbReference type="ChEBI" id="CHEBI:49016"/>
        <dbReference type="ChEBI" id="CHEBI:49252"/>
        <dbReference type="EC" id="1.13.11.53"/>
    </reaction>
</comment>
<comment type="catalytic activity">
    <reaction evidence="1">
        <text>1,2-dihydroxy-5-(methylsulfanyl)pent-1-en-3-one + O2 = 4-methylsulfanyl-2-oxobutanoate + formate + 2 H(+)</text>
        <dbReference type="Rhea" id="RHEA:24504"/>
        <dbReference type="ChEBI" id="CHEBI:15378"/>
        <dbReference type="ChEBI" id="CHEBI:15379"/>
        <dbReference type="ChEBI" id="CHEBI:15740"/>
        <dbReference type="ChEBI" id="CHEBI:16723"/>
        <dbReference type="ChEBI" id="CHEBI:49252"/>
        <dbReference type="EC" id="1.13.11.54"/>
    </reaction>
</comment>
<comment type="cofactor">
    <cofactor evidence="1">
        <name>Fe(2+)</name>
        <dbReference type="ChEBI" id="CHEBI:29033"/>
    </cofactor>
    <text evidence="1">Binds 1 Fe(2+) cation per monomer.</text>
</comment>
<comment type="cofactor">
    <cofactor evidence="1">
        <name>Ni(2+)</name>
        <dbReference type="ChEBI" id="CHEBI:49786"/>
    </cofactor>
    <text evidence="1">Binds 1 nickel ion per monomer.</text>
</comment>
<comment type="pathway">
    <text evidence="1">Amino-acid biosynthesis; L-methionine biosynthesis via salvage pathway; L-methionine from S-methyl-5-thio-alpha-D-ribose 1-phosphate: step 5/6.</text>
</comment>
<comment type="subunit">
    <text evidence="1">Monomer.</text>
</comment>
<comment type="similarity">
    <text evidence="1">Belongs to the acireductone dioxygenase (ARD) family.</text>
</comment>
<organism>
    <name type="scientific">Xanthomonas oryzae pv. oryzae (strain MAFF 311018)</name>
    <dbReference type="NCBI Taxonomy" id="342109"/>
    <lineage>
        <taxon>Bacteria</taxon>
        <taxon>Pseudomonadati</taxon>
        <taxon>Pseudomonadota</taxon>
        <taxon>Gammaproteobacteria</taxon>
        <taxon>Lysobacterales</taxon>
        <taxon>Lysobacteraceae</taxon>
        <taxon>Xanthomonas</taxon>
    </lineage>
</organism>
<name>MTND_XANOM</name>
<gene>
    <name evidence="1" type="primary">mtnD</name>
    <name type="ordered locus">XOO2007</name>
</gene>
<accession>Q2P3W5</accession>
<reference key="1">
    <citation type="journal article" date="2005" name="Jpn. Agric. Res. Q.">
        <title>Genome sequence of Xanthomonas oryzae pv. oryzae suggests contribution of large numbers of effector genes and insertion sequences to its race diversity.</title>
        <authorList>
            <person name="Ochiai H."/>
            <person name="Inoue Y."/>
            <person name="Takeya M."/>
            <person name="Sasaki A."/>
            <person name="Kaku H."/>
        </authorList>
    </citation>
    <scope>NUCLEOTIDE SEQUENCE [LARGE SCALE GENOMIC DNA]</scope>
    <source>
        <strain>MAFF 311018</strain>
    </source>
</reference>